<name>RRF_BIFA0</name>
<dbReference type="EMBL" id="CP001213">
    <property type="protein sequence ID" value="ACL29585.1"/>
    <property type="molecule type" value="Genomic_DNA"/>
</dbReference>
<dbReference type="RefSeq" id="WP_004269087.1">
    <property type="nucleotide sequence ID" value="NC_011835.1"/>
</dbReference>
<dbReference type="SMR" id="B8DUA6"/>
<dbReference type="STRING" id="442563.BLA_1298"/>
<dbReference type="GeneID" id="29695188"/>
<dbReference type="KEGG" id="bla:BLA_1298"/>
<dbReference type="PATRIC" id="fig|442563.4.peg.1360"/>
<dbReference type="HOGENOM" id="CLU_073981_2_0_11"/>
<dbReference type="Proteomes" id="UP000002456">
    <property type="component" value="Chromosome"/>
</dbReference>
<dbReference type="GO" id="GO:0005737">
    <property type="term" value="C:cytoplasm"/>
    <property type="evidence" value="ECO:0007669"/>
    <property type="project" value="UniProtKB-SubCell"/>
</dbReference>
<dbReference type="GO" id="GO:0043023">
    <property type="term" value="F:ribosomal large subunit binding"/>
    <property type="evidence" value="ECO:0007669"/>
    <property type="project" value="TreeGrafter"/>
</dbReference>
<dbReference type="GO" id="GO:0006415">
    <property type="term" value="P:translational termination"/>
    <property type="evidence" value="ECO:0007669"/>
    <property type="project" value="UniProtKB-UniRule"/>
</dbReference>
<dbReference type="CDD" id="cd00520">
    <property type="entry name" value="RRF"/>
    <property type="match status" value="1"/>
</dbReference>
<dbReference type="FunFam" id="1.10.132.20:FF:000001">
    <property type="entry name" value="Ribosome-recycling factor"/>
    <property type="match status" value="1"/>
</dbReference>
<dbReference type="FunFam" id="3.30.1360.40:FF:000001">
    <property type="entry name" value="Ribosome-recycling factor"/>
    <property type="match status" value="1"/>
</dbReference>
<dbReference type="Gene3D" id="3.30.1360.40">
    <property type="match status" value="1"/>
</dbReference>
<dbReference type="Gene3D" id="1.10.132.20">
    <property type="entry name" value="Ribosome-recycling factor"/>
    <property type="match status" value="1"/>
</dbReference>
<dbReference type="HAMAP" id="MF_00040">
    <property type="entry name" value="RRF"/>
    <property type="match status" value="1"/>
</dbReference>
<dbReference type="InterPro" id="IPR002661">
    <property type="entry name" value="Ribosome_recyc_fac"/>
</dbReference>
<dbReference type="InterPro" id="IPR023584">
    <property type="entry name" value="Ribosome_recyc_fac_dom"/>
</dbReference>
<dbReference type="InterPro" id="IPR036191">
    <property type="entry name" value="RRF_sf"/>
</dbReference>
<dbReference type="NCBIfam" id="TIGR00496">
    <property type="entry name" value="frr"/>
    <property type="match status" value="1"/>
</dbReference>
<dbReference type="PANTHER" id="PTHR20982:SF3">
    <property type="entry name" value="MITOCHONDRIAL RIBOSOME RECYCLING FACTOR PSEUDO 1"/>
    <property type="match status" value="1"/>
</dbReference>
<dbReference type="PANTHER" id="PTHR20982">
    <property type="entry name" value="RIBOSOME RECYCLING FACTOR"/>
    <property type="match status" value="1"/>
</dbReference>
<dbReference type="Pfam" id="PF01765">
    <property type="entry name" value="RRF"/>
    <property type="match status" value="1"/>
</dbReference>
<dbReference type="SUPFAM" id="SSF55194">
    <property type="entry name" value="Ribosome recycling factor, RRF"/>
    <property type="match status" value="1"/>
</dbReference>
<evidence type="ECO:0000255" key="1">
    <source>
        <dbReference type="HAMAP-Rule" id="MF_00040"/>
    </source>
</evidence>
<protein>
    <recommendedName>
        <fullName evidence="1">Ribosome-recycling factor</fullName>
        <shortName evidence="1">RRF</shortName>
    </recommendedName>
    <alternativeName>
        <fullName evidence="1">Ribosome-releasing factor</fullName>
    </alternativeName>
</protein>
<proteinExistence type="inferred from homology"/>
<sequence>MANVVDQSKEQMKKSVESTKENFAGIRTGRANPALLNGIVVEYYGAPTPLKHVATIGVPEPRTLSVTPFDPSQANAVEKALRDSDLGASPRRNGSAILLTMPELTEDRRKEYVKLAKSKAEDGKVAVRNIRRKSKEAIDKAVKDGEMGEDEGDRLLKELDKVTKATTDELDALLEAKQKEIMEV</sequence>
<feature type="chain" id="PRO_1000194900" description="Ribosome-recycling factor">
    <location>
        <begin position="1"/>
        <end position="184"/>
    </location>
</feature>
<gene>
    <name evidence="1" type="primary">frr</name>
    <name type="ordered locus">BLA_1298</name>
</gene>
<comment type="function">
    <text evidence="1">Responsible for the release of ribosomes from messenger RNA at the termination of protein biosynthesis. May increase the efficiency of translation by recycling ribosomes from one round of translation to another.</text>
</comment>
<comment type="subcellular location">
    <subcellularLocation>
        <location evidence="1">Cytoplasm</location>
    </subcellularLocation>
</comment>
<comment type="similarity">
    <text evidence="1">Belongs to the RRF family.</text>
</comment>
<reference key="1">
    <citation type="journal article" date="2009" name="J. Bacteriol.">
        <title>Genome sequence of the probiotic bacterium Bifidobacterium animalis subsp. lactis AD011.</title>
        <authorList>
            <person name="Kim J.F."/>
            <person name="Jeong H."/>
            <person name="Yu D.S."/>
            <person name="Choi S.-H."/>
            <person name="Hur C.-G."/>
            <person name="Park M.-S."/>
            <person name="Yoon S.H."/>
            <person name="Kim D.-W."/>
            <person name="Ji G.E."/>
            <person name="Park H.-S."/>
            <person name="Oh T.K."/>
        </authorList>
    </citation>
    <scope>NUCLEOTIDE SEQUENCE [LARGE SCALE GENOMIC DNA]</scope>
    <source>
        <strain>AD011</strain>
    </source>
</reference>
<keyword id="KW-0963">Cytoplasm</keyword>
<keyword id="KW-0648">Protein biosynthesis</keyword>
<keyword id="KW-1185">Reference proteome</keyword>
<organism>
    <name type="scientific">Bifidobacterium animalis subsp. lactis (strain AD011)</name>
    <dbReference type="NCBI Taxonomy" id="442563"/>
    <lineage>
        <taxon>Bacteria</taxon>
        <taxon>Bacillati</taxon>
        <taxon>Actinomycetota</taxon>
        <taxon>Actinomycetes</taxon>
        <taxon>Bifidobacteriales</taxon>
        <taxon>Bifidobacteriaceae</taxon>
        <taxon>Bifidobacterium</taxon>
    </lineage>
</organism>
<accession>B8DUA6</accession>